<gene>
    <name evidence="1" type="primary">otsA</name>
    <name type="ordered locus">c2310</name>
</gene>
<organism>
    <name type="scientific">Escherichia coli O6:H1 (strain CFT073 / ATCC 700928 / UPEC)</name>
    <dbReference type="NCBI Taxonomy" id="199310"/>
    <lineage>
        <taxon>Bacteria</taxon>
        <taxon>Pseudomonadati</taxon>
        <taxon>Pseudomonadota</taxon>
        <taxon>Gammaproteobacteria</taxon>
        <taxon>Enterobacterales</taxon>
        <taxon>Enterobacteriaceae</taxon>
        <taxon>Escherichia</taxon>
    </lineage>
</organism>
<proteinExistence type="inferred from homology"/>
<accession>Q8FGN6</accession>
<feature type="chain" id="PRO_0000348899" description="Trehalose-6-phosphate synthase">
    <location>
        <begin position="1"/>
        <end position="474"/>
    </location>
</feature>
<feature type="binding site" evidence="1">
    <location>
        <position position="10"/>
    </location>
    <ligand>
        <name>D-glucose 6-phosphate</name>
        <dbReference type="ChEBI" id="CHEBI:61548"/>
    </ligand>
</feature>
<feature type="binding site" evidence="1">
    <location>
        <begin position="22"/>
        <end position="23"/>
    </location>
    <ligand>
        <name>UDP-alpha-D-glucose</name>
        <dbReference type="ChEBI" id="CHEBI:58885"/>
    </ligand>
</feature>
<feature type="binding site" evidence="1">
    <location>
        <position position="77"/>
    </location>
    <ligand>
        <name>D-glucose 6-phosphate</name>
        <dbReference type="ChEBI" id="CHEBI:61548"/>
    </ligand>
</feature>
<feature type="binding site" evidence="1">
    <location>
        <position position="131"/>
    </location>
    <ligand>
        <name>D-glucose 6-phosphate</name>
        <dbReference type="ChEBI" id="CHEBI:61548"/>
    </ligand>
</feature>
<feature type="binding site" evidence="1">
    <location>
        <position position="263"/>
    </location>
    <ligand>
        <name>UDP-alpha-D-glucose</name>
        <dbReference type="ChEBI" id="CHEBI:58885"/>
    </ligand>
</feature>
<feature type="binding site" evidence="1">
    <location>
        <position position="268"/>
    </location>
    <ligand>
        <name>UDP-alpha-D-glucose</name>
        <dbReference type="ChEBI" id="CHEBI:58885"/>
    </ligand>
</feature>
<feature type="binding site" evidence="1">
    <location>
        <position position="301"/>
    </location>
    <ligand>
        <name>D-glucose 6-phosphate</name>
        <dbReference type="ChEBI" id="CHEBI:61548"/>
    </ligand>
</feature>
<feature type="binding site" evidence="1">
    <location>
        <position position="340"/>
    </location>
    <ligand>
        <name>UDP-alpha-D-glucose</name>
        <dbReference type="ChEBI" id="CHEBI:58885"/>
    </ligand>
</feature>
<feature type="binding site" evidence="1">
    <location>
        <begin position="366"/>
        <end position="370"/>
    </location>
    <ligand>
        <name>UDP-alpha-D-glucose</name>
        <dbReference type="ChEBI" id="CHEBI:58885"/>
    </ligand>
</feature>
<feature type="site" description="Involved in alpha anomer selectivity" evidence="1">
    <location>
        <position position="86"/>
    </location>
</feature>
<feature type="site" description="Involved in alpha anomer selectivity" evidence="1">
    <location>
        <position position="156"/>
    </location>
</feature>
<reference key="1">
    <citation type="journal article" date="2002" name="Proc. Natl. Acad. Sci. U.S.A.">
        <title>Extensive mosaic structure revealed by the complete genome sequence of uropathogenic Escherichia coli.</title>
        <authorList>
            <person name="Welch R.A."/>
            <person name="Burland V."/>
            <person name="Plunkett G. III"/>
            <person name="Redford P."/>
            <person name="Roesch P."/>
            <person name="Rasko D."/>
            <person name="Buckles E.L."/>
            <person name="Liou S.-R."/>
            <person name="Boutin A."/>
            <person name="Hackett J."/>
            <person name="Stroud D."/>
            <person name="Mayhew G.F."/>
            <person name="Rose D.J."/>
            <person name="Zhou S."/>
            <person name="Schwartz D.C."/>
            <person name="Perna N.T."/>
            <person name="Mobley H.L.T."/>
            <person name="Donnenberg M.S."/>
            <person name="Blattner F.R."/>
        </authorList>
    </citation>
    <scope>NUCLEOTIDE SEQUENCE [LARGE SCALE GENOMIC DNA]</scope>
    <source>
        <strain>CFT073 / ATCC 700928 / UPEC</strain>
    </source>
</reference>
<name>OTSA_ECOL6</name>
<sequence length="474" mass="53528">MSRLVVVSNRIAPPDEHAASAGGLAVGILGALKAAGGLWFGWSGETGNEDQPLKKVKKGNITWASFNLSEQDLDEYYNKFSNAVLWPAFHYRLDLVQFQRPAWDGYLRVNALLADKLLPLLQDDDIIWIHDYHLLPFAHELRKRGVNNRIGFFLHIPFPTPEIFNALPTYDTLLEQLCDYDLLGFQTENDRLAFLDCLSNLTRVTTRSAKSHTACGKAFRTEVYPIGIEPKEIAKQAAGPLPPKLAQLKAELKNVQNIFSVERLDYSKGLPERFLAYEALLEKYPQHHGKIRYTQIAPTSRGDVQAYQDIRHQLENEAGRINGKYGQLGWTPLYYLNQHFDRKLLMKIFRYSDVGLVTPLRDGMNLVAKEYVAAQDPANPGVLVLSQFAGAANELTSALIVNPYDRDEVAAALDRALTMSLAERISRHAEMLDVIVKNDINHWQECFISDLKQIVPRSAESQQRDKVATFPKLA</sequence>
<keyword id="KW-0328">Glycosyltransferase</keyword>
<keyword id="KW-1185">Reference proteome</keyword>
<keyword id="KW-0808">Transferase</keyword>
<dbReference type="EC" id="2.4.1.15" evidence="1"/>
<dbReference type="EMBL" id="AE014075">
    <property type="protein sequence ID" value="AAN80769.1"/>
    <property type="status" value="ALT_INIT"/>
    <property type="molecule type" value="Genomic_DNA"/>
</dbReference>
<dbReference type="RefSeq" id="WP_001296148.1">
    <property type="nucleotide sequence ID" value="NZ_CP051263.1"/>
</dbReference>
<dbReference type="SMR" id="Q8FGN6"/>
<dbReference type="STRING" id="199310.c2310"/>
<dbReference type="CAZy" id="GT20">
    <property type="family name" value="Glycosyltransferase Family 20"/>
</dbReference>
<dbReference type="KEGG" id="ecc:c2310"/>
<dbReference type="eggNOG" id="COG0380">
    <property type="taxonomic scope" value="Bacteria"/>
</dbReference>
<dbReference type="HOGENOM" id="CLU_002351_7_1_6"/>
<dbReference type="UniPathway" id="UPA00299"/>
<dbReference type="Proteomes" id="UP000001410">
    <property type="component" value="Chromosome"/>
</dbReference>
<dbReference type="GO" id="GO:0003825">
    <property type="term" value="F:alpha,alpha-trehalose-phosphate synthase (UDP-forming) activity"/>
    <property type="evidence" value="ECO:0007669"/>
    <property type="project" value="UniProtKB-EC"/>
</dbReference>
<dbReference type="GO" id="GO:0005992">
    <property type="term" value="P:trehalose biosynthetic process"/>
    <property type="evidence" value="ECO:0007669"/>
    <property type="project" value="UniProtKB-UniPathway"/>
</dbReference>
<dbReference type="CDD" id="cd03788">
    <property type="entry name" value="GT20_TPS"/>
    <property type="match status" value="1"/>
</dbReference>
<dbReference type="FunFam" id="3.40.50.2000:FF:000024">
    <property type="entry name" value="Trehalose-6-phosphate synthase"/>
    <property type="match status" value="1"/>
</dbReference>
<dbReference type="Gene3D" id="3.40.50.2000">
    <property type="entry name" value="Glycogen Phosphorylase B"/>
    <property type="match status" value="2"/>
</dbReference>
<dbReference type="InterPro" id="IPR001830">
    <property type="entry name" value="Glyco_trans_20"/>
</dbReference>
<dbReference type="InterPro" id="IPR012766">
    <property type="entry name" value="Trehalose_OtsA"/>
</dbReference>
<dbReference type="NCBIfam" id="NF007513">
    <property type="entry name" value="PRK10117.1"/>
    <property type="match status" value="1"/>
</dbReference>
<dbReference type="NCBIfam" id="TIGR02400">
    <property type="entry name" value="trehalose_OtsA"/>
    <property type="match status" value="1"/>
</dbReference>
<dbReference type="PANTHER" id="PTHR10788:SF106">
    <property type="entry name" value="BCDNA.GH08860"/>
    <property type="match status" value="1"/>
</dbReference>
<dbReference type="PANTHER" id="PTHR10788">
    <property type="entry name" value="TREHALOSE-6-PHOSPHATE SYNTHASE"/>
    <property type="match status" value="1"/>
</dbReference>
<dbReference type="Pfam" id="PF00982">
    <property type="entry name" value="Glyco_transf_20"/>
    <property type="match status" value="1"/>
</dbReference>
<dbReference type="SUPFAM" id="SSF53756">
    <property type="entry name" value="UDP-Glycosyltransferase/glycogen phosphorylase"/>
    <property type="match status" value="1"/>
</dbReference>
<evidence type="ECO:0000250" key="1">
    <source>
        <dbReference type="UniProtKB" id="P31677"/>
    </source>
</evidence>
<evidence type="ECO:0000305" key="2"/>
<comment type="function">
    <text evidence="1">Probably involved in the osmoprotection via the biosynthesis of trehalose. Catalyzes the transfer of glucose from UDP-alpha-D-glucose (UDP-Glc) to D-glucose 6-phosphate (Glc-6-P) to form trehalose-6-phosphate. Acts with retention of the anomeric configuration of the UDP-sugar donor.</text>
</comment>
<comment type="catalytic activity">
    <reaction evidence="1">
        <text>D-glucose 6-phosphate + UDP-alpha-D-glucose = alpha,alpha-trehalose 6-phosphate + UDP + H(+)</text>
        <dbReference type="Rhea" id="RHEA:18889"/>
        <dbReference type="ChEBI" id="CHEBI:15378"/>
        <dbReference type="ChEBI" id="CHEBI:58223"/>
        <dbReference type="ChEBI" id="CHEBI:58429"/>
        <dbReference type="ChEBI" id="CHEBI:58885"/>
        <dbReference type="ChEBI" id="CHEBI:61548"/>
        <dbReference type="EC" id="2.4.1.15"/>
    </reaction>
</comment>
<comment type="pathway">
    <text evidence="1">Glycan biosynthesis; trehalose biosynthesis.</text>
</comment>
<comment type="subunit">
    <text evidence="1">Homotetramer.</text>
</comment>
<comment type="similarity">
    <text evidence="1">Belongs to the glycosyltransferase 20 family.</text>
</comment>
<comment type="sequence caution" evidence="2">
    <conflict type="erroneous initiation">
        <sequence resource="EMBL-CDS" id="AAN80769"/>
    </conflict>
</comment>
<protein>
    <recommendedName>
        <fullName evidence="1">Trehalose-6-phosphate synthase</fullName>
        <shortName evidence="1">TPS</shortName>
        <ecNumber evidence="1">2.4.1.15</ecNumber>
    </recommendedName>
    <alternativeName>
        <fullName evidence="1">Alpha,alpha-trehalose-phosphate synthase [UDP-forming]</fullName>
    </alternativeName>
    <alternativeName>
        <fullName evidence="1">Osmoregulatory trehalose synthesis protein A</fullName>
        <shortName evidence="1">OtsA</shortName>
    </alternativeName>
    <alternativeName>
        <fullName evidence="1">UDP-glucose-glucosephosphate glucosyltransferase</fullName>
    </alternativeName>
</protein>